<accession>Q01697</accession>
<protein>
    <recommendedName>
        <fullName>Elongation factor G</fullName>
        <shortName>EF-G</shortName>
    </recommendedName>
</protein>
<proteinExistence type="inferred from homology"/>
<feature type="chain" id="PRO_0000091245" description="Elongation factor G">
    <location>
        <begin position="1" status="less than"/>
        <end position="17"/>
    </location>
</feature>
<feature type="non-terminal residue">
    <location>
        <position position="1"/>
    </location>
</feature>
<reference key="1">
    <citation type="journal article" date="1992" name="Eur. J. Biochem.">
        <title>Sequence of the tufA gene encoding elongation factor EF-Tu from Thermus aquaticus and overproduction of the protein in Escherichia coli.</title>
        <authorList>
            <person name="Voss R.H."/>
            <person name="Hartmann R.K."/>
            <person name="Lippmann C."/>
            <person name="Alexander C."/>
            <person name="Jahn O."/>
            <person name="Erdmann V."/>
        </authorList>
    </citation>
    <scope>NUCLEOTIDE SEQUENCE [GENOMIC DNA]</scope>
    <source>
        <strain>EP 00276</strain>
    </source>
</reference>
<name>EFG_THEAQ</name>
<gene>
    <name type="primary">fusA</name>
    <name type="synonym">fus</name>
</gene>
<comment type="function">
    <text evidence="1">Catalyzes the GTP-dependent ribosomal translocation step during translation elongation. During this step, the ribosome changes from the pre-translocational (PRE) to the post-translocational (POST) state as the newly formed A-site-bound peptidyl-tRNA and P-site-bound deacylated tRNA move to the P and E sites, respectively. Catalyzes the coordinated movement of the two tRNA molecules, the mRNA and conformational changes in the ribosome (By similarity).</text>
</comment>
<comment type="subcellular location">
    <subcellularLocation>
        <location evidence="1">Cytoplasm</location>
    </subcellularLocation>
</comment>
<comment type="similarity">
    <text evidence="2">Belongs to the GTP-binding elongation factor family. EF-G/EF-2 subfamily.</text>
</comment>
<sequence>HYQEVPRQIQEKLIKGQ</sequence>
<organism>
    <name type="scientific">Thermus aquaticus</name>
    <dbReference type="NCBI Taxonomy" id="271"/>
    <lineage>
        <taxon>Bacteria</taxon>
        <taxon>Thermotogati</taxon>
        <taxon>Deinococcota</taxon>
        <taxon>Deinococci</taxon>
        <taxon>Thermales</taxon>
        <taxon>Thermaceae</taxon>
        <taxon>Thermus</taxon>
    </lineage>
</organism>
<keyword id="KW-0963">Cytoplasm</keyword>
<keyword id="KW-0251">Elongation factor</keyword>
<keyword id="KW-0342">GTP-binding</keyword>
<keyword id="KW-0547">Nucleotide-binding</keyword>
<keyword id="KW-0648">Protein biosynthesis</keyword>
<dbReference type="EMBL" id="X66322">
    <property type="protein sequence ID" value="CAA46997.1"/>
    <property type="molecule type" value="Genomic_DNA"/>
</dbReference>
<dbReference type="GO" id="GO:0005737">
    <property type="term" value="C:cytoplasm"/>
    <property type="evidence" value="ECO:0007669"/>
    <property type="project" value="UniProtKB-SubCell"/>
</dbReference>
<dbReference type="GO" id="GO:0005525">
    <property type="term" value="F:GTP binding"/>
    <property type="evidence" value="ECO:0007669"/>
    <property type="project" value="UniProtKB-KW"/>
</dbReference>
<dbReference type="GO" id="GO:0003746">
    <property type="term" value="F:translation elongation factor activity"/>
    <property type="evidence" value="ECO:0007669"/>
    <property type="project" value="UniProtKB-KW"/>
</dbReference>
<evidence type="ECO:0000250" key="1"/>
<evidence type="ECO:0000305" key="2"/>